<gene>
    <name type="ordered locus">YPO2781</name>
    <name type="ordered locus">y1614</name>
    <name type="ordered locus">YP_2383</name>
</gene>
<organism>
    <name type="scientific">Yersinia pestis</name>
    <dbReference type="NCBI Taxonomy" id="632"/>
    <lineage>
        <taxon>Bacteria</taxon>
        <taxon>Pseudomonadati</taxon>
        <taxon>Pseudomonadota</taxon>
        <taxon>Gammaproteobacteria</taxon>
        <taxon>Enterobacterales</taxon>
        <taxon>Yersiniaceae</taxon>
        <taxon>Yersinia</taxon>
    </lineage>
</organism>
<proteinExistence type="inferred from homology"/>
<dbReference type="EC" id="3.6.-.-"/>
<dbReference type="EMBL" id="AL590842">
    <property type="protein sequence ID" value="CAL21400.1"/>
    <property type="molecule type" value="Genomic_DNA"/>
</dbReference>
<dbReference type="EMBL" id="AE009952">
    <property type="protein sequence ID" value="AAM85183.1"/>
    <property type="molecule type" value="Genomic_DNA"/>
</dbReference>
<dbReference type="EMBL" id="AE017042">
    <property type="protein sequence ID" value="AAS62588.1"/>
    <property type="molecule type" value="Genomic_DNA"/>
</dbReference>
<dbReference type="PIR" id="AE0339">
    <property type="entry name" value="AE0339"/>
</dbReference>
<dbReference type="RefSeq" id="YP_002347728.1">
    <property type="nucleotide sequence ID" value="NC_003143.1"/>
</dbReference>
<dbReference type="SMR" id="Q8ZD12"/>
<dbReference type="IntAct" id="Q8ZD12">
    <property type="interactions" value="4"/>
</dbReference>
<dbReference type="STRING" id="214092.YPO2781"/>
<dbReference type="PaxDb" id="214092-YPO2781"/>
<dbReference type="DNASU" id="1146561"/>
<dbReference type="EnsemblBacteria" id="AAS62588">
    <property type="protein sequence ID" value="AAS62588"/>
    <property type="gene ID" value="YP_2383"/>
</dbReference>
<dbReference type="KEGG" id="ype:YPO2781"/>
<dbReference type="KEGG" id="ypk:y1614"/>
<dbReference type="KEGG" id="ypm:YP_2383"/>
<dbReference type="PATRIC" id="fig|214092.21.peg.3228"/>
<dbReference type="eggNOG" id="COG1443">
    <property type="taxonomic scope" value="Bacteria"/>
</dbReference>
<dbReference type="HOGENOM" id="CLU_060552_3_0_6"/>
<dbReference type="OMA" id="KDFYPGW"/>
<dbReference type="OrthoDB" id="517136at2"/>
<dbReference type="Proteomes" id="UP000000815">
    <property type="component" value="Chromosome"/>
</dbReference>
<dbReference type="Proteomes" id="UP000001019">
    <property type="component" value="Chromosome"/>
</dbReference>
<dbReference type="Proteomes" id="UP000002490">
    <property type="component" value="Chromosome"/>
</dbReference>
<dbReference type="GO" id="GO:0005737">
    <property type="term" value="C:cytoplasm"/>
    <property type="evidence" value="ECO:0000318"/>
    <property type="project" value="GO_Central"/>
</dbReference>
<dbReference type="GO" id="GO:0016818">
    <property type="term" value="F:hydrolase activity, acting on acid anhydrides, in phosphorus-containing anhydrides"/>
    <property type="evidence" value="ECO:0000318"/>
    <property type="project" value="GO_Central"/>
</dbReference>
<dbReference type="GO" id="GO:0046872">
    <property type="term" value="F:metal ion binding"/>
    <property type="evidence" value="ECO:0007669"/>
    <property type="project" value="UniProtKB-KW"/>
</dbReference>
<dbReference type="CDD" id="cd04697">
    <property type="entry name" value="NUDIX_Hydrolase"/>
    <property type="match status" value="1"/>
</dbReference>
<dbReference type="Gene3D" id="3.90.79.10">
    <property type="entry name" value="Nucleoside Triphosphate Pyrophosphohydrolase"/>
    <property type="match status" value="1"/>
</dbReference>
<dbReference type="InterPro" id="IPR015797">
    <property type="entry name" value="NUDIX_hydrolase-like_dom_sf"/>
</dbReference>
<dbReference type="InterPro" id="IPR000086">
    <property type="entry name" value="NUDIX_hydrolase_dom"/>
</dbReference>
<dbReference type="InterPro" id="IPR024195">
    <property type="entry name" value="NUDIX_hydrolase_YfcD_pred"/>
</dbReference>
<dbReference type="NCBIfam" id="NF011922">
    <property type="entry name" value="PRK15393.1"/>
    <property type="match status" value="1"/>
</dbReference>
<dbReference type="PANTHER" id="PTHR10885">
    <property type="entry name" value="ISOPENTENYL-DIPHOSPHATE DELTA-ISOMERASE"/>
    <property type="match status" value="1"/>
</dbReference>
<dbReference type="PANTHER" id="PTHR10885:SF0">
    <property type="entry name" value="ISOPENTENYL-DIPHOSPHATE DELTA-ISOMERASE"/>
    <property type="match status" value="1"/>
</dbReference>
<dbReference type="Pfam" id="PF00293">
    <property type="entry name" value="NUDIX"/>
    <property type="match status" value="1"/>
</dbReference>
<dbReference type="PIRSF" id="PIRSF017340">
    <property type="entry name" value="Nudix_hydro"/>
    <property type="match status" value="1"/>
</dbReference>
<dbReference type="SUPFAM" id="SSF55811">
    <property type="entry name" value="Nudix"/>
    <property type="match status" value="1"/>
</dbReference>
<dbReference type="PROSITE" id="PS51462">
    <property type="entry name" value="NUDIX"/>
    <property type="match status" value="1"/>
</dbReference>
<comment type="cofactor">
    <cofactor evidence="1">
        <name>Mg(2+)</name>
        <dbReference type="ChEBI" id="CHEBI:18420"/>
    </cofactor>
</comment>
<comment type="similarity">
    <text evidence="3">Belongs to the Nudix hydrolase family.</text>
</comment>
<reference key="1">
    <citation type="journal article" date="2001" name="Nature">
        <title>Genome sequence of Yersinia pestis, the causative agent of plague.</title>
        <authorList>
            <person name="Parkhill J."/>
            <person name="Wren B.W."/>
            <person name="Thomson N.R."/>
            <person name="Titball R.W."/>
            <person name="Holden M.T.G."/>
            <person name="Prentice M.B."/>
            <person name="Sebaihia M."/>
            <person name="James K.D."/>
            <person name="Churcher C.M."/>
            <person name="Mungall K.L."/>
            <person name="Baker S."/>
            <person name="Basham D."/>
            <person name="Bentley S.D."/>
            <person name="Brooks K."/>
            <person name="Cerdeno-Tarraga A.-M."/>
            <person name="Chillingworth T."/>
            <person name="Cronin A."/>
            <person name="Davies R.M."/>
            <person name="Davis P."/>
            <person name="Dougan G."/>
            <person name="Feltwell T."/>
            <person name="Hamlin N."/>
            <person name="Holroyd S."/>
            <person name="Jagels K."/>
            <person name="Karlyshev A.V."/>
            <person name="Leather S."/>
            <person name="Moule S."/>
            <person name="Oyston P.C.F."/>
            <person name="Quail M.A."/>
            <person name="Rutherford K.M."/>
            <person name="Simmonds M."/>
            <person name="Skelton J."/>
            <person name="Stevens K."/>
            <person name="Whitehead S."/>
            <person name="Barrell B.G."/>
        </authorList>
    </citation>
    <scope>NUCLEOTIDE SEQUENCE [LARGE SCALE GENOMIC DNA]</scope>
    <source>
        <strain>CO-92 / Biovar Orientalis</strain>
    </source>
</reference>
<reference key="2">
    <citation type="journal article" date="2002" name="J. Bacteriol.">
        <title>Genome sequence of Yersinia pestis KIM.</title>
        <authorList>
            <person name="Deng W."/>
            <person name="Burland V."/>
            <person name="Plunkett G. III"/>
            <person name="Boutin A."/>
            <person name="Mayhew G.F."/>
            <person name="Liss P."/>
            <person name="Perna N.T."/>
            <person name="Rose D.J."/>
            <person name="Mau B."/>
            <person name="Zhou S."/>
            <person name="Schwartz D.C."/>
            <person name="Fetherston J.D."/>
            <person name="Lindler L.E."/>
            <person name="Brubaker R.R."/>
            <person name="Plano G.V."/>
            <person name="Straley S.C."/>
            <person name="McDonough K.A."/>
            <person name="Nilles M.L."/>
            <person name="Matson J.S."/>
            <person name="Blattner F.R."/>
            <person name="Perry R.D."/>
        </authorList>
    </citation>
    <scope>NUCLEOTIDE SEQUENCE [LARGE SCALE GENOMIC DNA]</scope>
    <source>
        <strain>KIM10+ / Biovar Mediaevalis</strain>
    </source>
</reference>
<reference key="3">
    <citation type="journal article" date="2004" name="DNA Res.">
        <title>Complete genome sequence of Yersinia pestis strain 91001, an isolate avirulent to humans.</title>
        <authorList>
            <person name="Song Y."/>
            <person name="Tong Z."/>
            <person name="Wang J."/>
            <person name="Wang L."/>
            <person name="Guo Z."/>
            <person name="Han Y."/>
            <person name="Zhang J."/>
            <person name="Pei D."/>
            <person name="Zhou D."/>
            <person name="Qin H."/>
            <person name="Pang X."/>
            <person name="Han Y."/>
            <person name="Zhai J."/>
            <person name="Li M."/>
            <person name="Cui B."/>
            <person name="Qi Z."/>
            <person name="Jin L."/>
            <person name="Dai R."/>
            <person name="Chen F."/>
            <person name="Li S."/>
            <person name="Ye C."/>
            <person name="Du Z."/>
            <person name="Lin W."/>
            <person name="Wang J."/>
            <person name="Yu J."/>
            <person name="Yang H."/>
            <person name="Wang J."/>
            <person name="Huang P."/>
            <person name="Yang R."/>
        </authorList>
    </citation>
    <scope>NUCLEOTIDE SEQUENCE [LARGE SCALE GENOMIC DNA]</scope>
    <source>
        <strain>91001 / Biovar Mediaevalis</strain>
    </source>
</reference>
<name>Y2781_YERPE</name>
<evidence type="ECO:0000250" key="1"/>
<evidence type="ECO:0000255" key="2">
    <source>
        <dbReference type="PROSITE-ProRule" id="PRU00794"/>
    </source>
</evidence>
<evidence type="ECO:0000305" key="3"/>
<keyword id="KW-0378">Hydrolase</keyword>
<keyword id="KW-0460">Magnesium</keyword>
<keyword id="KW-0479">Metal-binding</keyword>
<keyword id="KW-1185">Reference proteome</keyword>
<protein>
    <recommendedName>
        <fullName>Uncharacterized Nudix hydrolase YPO2781/y1614/YP_2383</fullName>
        <ecNumber>3.6.-.-</ecNumber>
    </recommendedName>
</protein>
<accession>Q8ZD12</accession>
<accession>Q0WDB0</accession>
<feature type="chain" id="PRO_0000057088" description="Uncharacterized Nudix hydrolase YPO2781/y1614/YP_2383">
    <location>
        <begin position="1"/>
        <end position="182"/>
    </location>
</feature>
<feature type="domain" description="Nudix hydrolase" evidence="2">
    <location>
        <begin position="36"/>
        <end position="164"/>
    </location>
</feature>
<feature type="short sequence motif" description="Nudix box">
    <location>
        <begin position="73"/>
        <end position="95"/>
    </location>
</feature>
<feature type="binding site" evidence="1">
    <location>
        <position position="89"/>
    </location>
    <ligand>
        <name>Mg(2+)</name>
        <dbReference type="ChEBI" id="CHEBI:18420"/>
    </ligand>
</feature>
<feature type="binding site" evidence="1">
    <location>
        <position position="93"/>
    </location>
    <ligand>
        <name>Mg(2+)</name>
        <dbReference type="ChEBI" id="CHEBI:18420"/>
    </ligand>
</feature>
<sequence>MVEQNPAAVIEWVDIVDEQNNVIAQSSRQQMRAQRLRHRATYIVVHDGMGKILVQRRTESKDFHPGKLDATAGGVVQSGENYLESARREAEEELGIAGVPFAEHGQFYFEEECCRVWGALFSCVSHGPFALQPEEIDEVCWMVPEEITARCDEFTPDSLKALSLWLTRNNEQDYGKITPREA</sequence>